<evidence type="ECO:0000255" key="1">
    <source>
        <dbReference type="HAMAP-Rule" id="MF_00074"/>
    </source>
</evidence>
<feature type="chain" id="PRO_0000184369" description="Ribosomal RNA small subunit methyltransferase G">
    <location>
        <begin position="1"/>
        <end position="212"/>
    </location>
</feature>
<feature type="binding site" evidence="1">
    <location>
        <position position="80"/>
    </location>
    <ligand>
        <name>S-adenosyl-L-methionine</name>
        <dbReference type="ChEBI" id="CHEBI:59789"/>
    </ligand>
</feature>
<feature type="binding site" evidence="1">
    <location>
        <position position="85"/>
    </location>
    <ligand>
        <name>S-adenosyl-L-methionine</name>
        <dbReference type="ChEBI" id="CHEBI:59789"/>
    </ligand>
</feature>
<feature type="binding site" evidence="1">
    <location>
        <begin position="131"/>
        <end position="132"/>
    </location>
    <ligand>
        <name>S-adenosyl-L-methionine</name>
        <dbReference type="ChEBI" id="CHEBI:59789"/>
    </ligand>
</feature>
<feature type="binding site" evidence="1">
    <location>
        <position position="146"/>
    </location>
    <ligand>
        <name>S-adenosyl-L-methionine</name>
        <dbReference type="ChEBI" id="CHEBI:59789"/>
    </ligand>
</feature>
<organism>
    <name type="scientific">Xanthomonas campestris pv. campestris (strain ATCC 33913 / DSM 3586 / NCPPB 528 / LMG 568 / P 25)</name>
    <dbReference type="NCBI Taxonomy" id="190485"/>
    <lineage>
        <taxon>Bacteria</taxon>
        <taxon>Pseudomonadati</taxon>
        <taxon>Pseudomonadota</taxon>
        <taxon>Gammaproteobacteria</taxon>
        <taxon>Lysobacterales</taxon>
        <taxon>Lysobacteraceae</taxon>
        <taxon>Xanthomonas</taxon>
    </lineage>
</organism>
<keyword id="KW-0963">Cytoplasm</keyword>
<keyword id="KW-0489">Methyltransferase</keyword>
<keyword id="KW-1185">Reference proteome</keyword>
<keyword id="KW-0698">rRNA processing</keyword>
<keyword id="KW-0949">S-adenosyl-L-methionine</keyword>
<keyword id="KW-0808">Transferase</keyword>
<name>RSMG_XANCP</name>
<dbReference type="EC" id="2.1.1.170" evidence="1"/>
<dbReference type="EMBL" id="AE008922">
    <property type="protein sequence ID" value="AAM43262.1"/>
    <property type="molecule type" value="Genomic_DNA"/>
</dbReference>
<dbReference type="RefSeq" id="NP_639380.2">
    <property type="nucleotide sequence ID" value="NC_003902.1"/>
</dbReference>
<dbReference type="RefSeq" id="WP_011039110.1">
    <property type="nucleotide sequence ID" value="NC_003902.1"/>
</dbReference>
<dbReference type="SMR" id="Q8P3N0"/>
<dbReference type="STRING" id="190485.XCC4041"/>
<dbReference type="EnsemblBacteria" id="AAM43262">
    <property type="protein sequence ID" value="AAM43262"/>
    <property type="gene ID" value="XCC4041"/>
</dbReference>
<dbReference type="KEGG" id="xcc:XCC4041"/>
<dbReference type="PATRIC" id="fig|190485.4.peg.4328"/>
<dbReference type="eggNOG" id="COG0357">
    <property type="taxonomic scope" value="Bacteria"/>
</dbReference>
<dbReference type="HOGENOM" id="CLU_065341_2_0_6"/>
<dbReference type="OrthoDB" id="9808773at2"/>
<dbReference type="Proteomes" id="UP000001010">
    <property type="component" value="Chromosome"/>
</dbReference>
<dbReference type="GO" id="GO:0005829">
    <property type="term" value="C:cytosol"/>
    <property type="evidence" value="ECO:0000318"/>
    <property type="project" value="GO_Central"/>
</dbReference>
<dbReference type="GO" id="GO:0070043">
    <property type="term" value="F:rRNA (guanine-N7-)-methyltransferase activity"/>
    <property type="evidence" value="ECO:0000318"/>
    <property type="project" value="GO_Central"/>
</dbReference>
<dbReference type="FunFam" id="3.40.50.150:FF:000752">
    <property type="entry name" value="Ribosomal RNA small subunit methyltransferase G"/>
    <property type="match status" value="1"/>
</dbReference>
<dbReference type="Gene3D" id="3.40.50.150">
    <property type="entry name" value="Vaccinia Virus protein VP39"/>
    <property type="match status" value="1"/>
</dbReference>
<dbReference type="HAMAP" id="MF_00074">
    <property type="entry name" value="16SrRNA_methyltr_G"/>
    <property type="match status" value="1"/>
</dbReference>
<dbReference type="InterPro" id="IPR003682">
    <property type="entry name" value="rRNA_ssu_MeTfrase_G"/>
</dbReference>
<dbReference type="InterPro" id="IPR029063">
    <property type="entry name" value="SAM-dependent_MTases_sf"/>
</dbReference>
<dbReference type="NCBIfam" id="TIGR00138">
    <property type="entry name" value="rsmG_gidB"/>
    <property type="match status" value="1"/>
</dbReference>
<dbReference type="PANTHER" id="PTHR31760">
    <property type="entry name" value="S-ADENOSYL-L-METHIONINE-DEPENDENT METHYLTRANSFERASES SUPERFAMILY PROTEIN"/>
    <property type="match status" value="1"/>
</dbReference>
<dbReference type="PANTHER" id="PTHR31760:SF0">
    <property type="entry name" value="S-ADENOSYL-L-METHIONINE-DEPENDENT METHYLTRANSFERASES SUPERFAMILY PROTEIN"/>
    <property type="match status" value="1"/>
</dbReference>
<dbReference type="Pfam" id="PF02527">
    <property type="entry name" value="GidB"/>
    <property type="match status" value="1"/>
</dbReference>
<dbReference type="PIRSF" id="PIRSF003078">
    <property type="entry name" value="GidB"/>
    <property type="match status" value="1"/>
</dbReference>
<dbReference type="SUPFAM" id="SSF53335">
    <property type="entry name" value="S-adenosyl-L-methionine-dependent methyltransferases"/>
    <property type="match status" value="1"/>
</dbReference>
<reference key="1">
    <citation type="journal article" date="2002" name="Nature">
        <title>Comparison of the genomes of two Xanthomonas pathogens with differing host specificities.</title>
        <authorList>
            <person name="da Silva A.C.R."/>
            <person name="Ferro J.A."/>
            <person name="Reinach F.C."/>
            <person name="Farah C.S."/>
            <person name="Furlan L.R."/>
            <person name="Quaggio R.B."/>
            <person name="Monteiro-Vitorello C.B."/>
            <person name="Van Sluys M.A."/>
            <person name="Almeida N.F. Jr."/>
            <person name="Alves L.M.C."/>
            <person name="do Amaral A.M."/>
            <person name="Bertolini M.C."/>
            <person name="Camargo L.E.A."/>
            <person name="Camarotte G."/>
            <person name="Cannavan F."/>
            <person name="Cardozo J."/>
            <person name="Chambergo F."/>
            <person name="Ciapina L.P."/>
            <person name="Cicarelli R.M.B."/>
            <person name="Coutinho L.L."/>
            <person name="Cursino-Santos J.R."/>
            <person name="El-Dorry H."/>
            <person name="Faria J.B."/>
            <person name="Ferreira A.J.S."/>
            <person name="Ferreira R.C.C."/>
            <person name="Ferro M.I.T."/>
            <person name="Formighieri E.F."/>
            <person name="Franco M.C."/>
            <person name="Greggio C.C."/>
            <person name="Gruber A."/>
            <person name="Katsuyama A.M."/>
            <person name="Kishi L.T."/>
            <person name="Leite R.P."/>
            <person name="Lemos E.G.M."/>
            <person name="Lemos M.V.F."/>
            <person name="Locali E.C."/>
            <person name="Machado M.A."/>
            <person name="Madeira A.M.B.N."/>
            <person name="Martinez-Rossi N.M."/>
            <person name="Martins E.C."/>
            <person name="Meidanis J."/>
            <person name="Menck C.F.M."/>
            <person name="Miyaki C.Y."/>
            <person name="Moon D.H."/>
            <person name="Moreira L.M."/>
            <person name="Novo M.T.M."/>
            <person name="Okura V.K."/>
            <person name="Oliveira M.C."/>
            <person name="Oliveira V.R."/>
            <person name="Pereira H.A."/>
            <person name="Rossi A."/>
            <person name="Sena J.A.D."/>
            <person name="Silva C."/>
            <person name="de Souza R.F."/>
            <person name="Spinola L.A.F."/>
            <person name="Takita M.A."/>
            <person name="Tamura R.E."/>
            <person name="Teixeira E.C."/>
            <person name="Tezza R.I.D."/>
            <person name="Trindade dos Santos M."/>
            <person name="Truffi D."/>
            <person name="Tsai S.M."/>
            <person name="White F.F."/>
            <person name="Setubal J.C."/>
            <person name="Kitajima J.P."/>
        </authorList>
    </citation>
    <scope>NUCLEOTIDE SEQUENCE [LARGE SCALE GENOMIC DNA]</scope>
    <source>
        <strain>ATCC 33913 / DSM 3586 / NCPPB 528 / LMG 568 / P 25</strain>
    </source>
</reference>
<protein>
    <recommendedName>
        <fullName evidence="1">Ribosomal RNA small subunit methyltransferase G</fullName>
        <ecNumber evidence="1">2.1.1.170</ecNumber>
    </recommendedName>
    <alternativeName>
        <fullName evidence="1">16S rRNA 7-methylguanosine methyltransferase</fullName>
        <shortName evidence="1">16S rRNA m7G methyltransferase</shortName>
    </alternativeName>
</protein>
<gene>
    <name evidence="1" type="primary">rsmG</name>
    <name type="ordered locus">XCC4041</name>
</gene>
<proteinExistence type="inferred from homology"/>
<comment type="function">
    <text evidence="1">Specifically methylates the N7 position of guanine in position 527 of 16S rRNA.</text>
</comment>
<comment type="catalytic activity">
    <reaction evidence="1">
        <text>guanosine(527) in 16S rRNA + S-adenosyl-L-methionine = N(7)-methylguanosine(527) in 16S rRNA + S-adenosyl-L-homocysteine</text>
        <dbReference type="Rhea" id="RHEA:42732"/>
        <dbReference type="Rhea" id="RHEA-COMP:10209"/>
        <dbReference type="Rhea" id="RHEA-COMP:10210"/>
        <dbReference type="ChEBI" id="CHEBI:57856"/>
        <dbReference type="ChEBI" id="CHEBI:59789"/>
        <dbReference type="ChEBI" id="CHEBI:74269"/>
        <dbReference type="ChEBI" id="CHEBI:74480"/>
        <dbReference type="EC" id="2.1.1.170"/>
    </reaction>
</comment>
<comment type="subcellular location">
    <subcellularLocation>
        <location evidence="1">Cytoplasm</location>
    </subcellularLocation>
</comment>
<comment type="similarity">
    <text evidence="1">Belongs to the methyltransferase superfamily. RNA methyltransferase RsmG family.</text>
</comment>
<sequence>MNDAALPPDVSAALANGLQAQSLDADFAAPLLRYLTLLVRWNKTYNLTAVRDPREMVTRHLLDSLAMQPYIVSGTLADLGTGPGLPGIPLAITRPQLQVTLVESNGKKARFMREALRHLALGNARVAEARAEAVDEPAAYDHLTARALDTLAGIIAVGGHLLRPGGSLLAMKGVYPHEEIAALPAGWRVGEVHPLQVPGLDGERHLVVVHKD</sequence>
<accession>Q8P3N0</accession>